<proteinExistence type="evidence at protein level"/>
<accession>P19994</accession>
<sequence length="248" mass="27409">MIICKTPRELGIMREAGRIVALTHEELKKHIKPGISTKELDQIAERFIKKQGAIPSFKGYNGFRGSICVSVNEELVHGIPGSRVLKDGDIISIDIGAKLNGYHGDSAWTYPVGNISDDDKKLLEVTEESLYKGLQEAKPGERLSNISHAIQTYVENEQFSVVREYVGHGVGQDLHEDPQIPHYGPPNKGPRLKPGMVLAIEPMVNAGSRYVKTLADNWTVVTVDGKKCAHFEHTIAITETGFDILTRV</sequence>
<feature type="chain" id="PRO_0000148927" description="Methionine aminopeptidase 1">
    <location>
        <begin position="1"/>
        <end position="248"/>
    </location>
</feature>
<feature type="binding site" evidence="1">
    <location>
        <position position="77"/>
    </location>
    <ligand>
        <name>substrate</name>
    </ligand>
</feature>
<feature type="binding site" evidence="1">
    <location>
        <position position="94"/>
    </location>
    <ligand>
        <name>a divalent metal cation</name>
        <dbReference type="ChEBI" id="CHEBI:60240"/>
        <label>1</label>
    </ligand>
</feature>
<feature type="binding site" evidence="1">
    <location>
        <position position="105"/>
    </location>
    <ligand>
        <name>a divalent metal cation</name>
        <dbReference type="ChEBI" id="CHEBI:60240"/>
        <label>1</label>
    </ligand>
</feature>
<feature type="binding site" evidence="1">
    <location>
        <position position="105"/>
    </location>
    <ligand>
        <name>a divalent metal cation</name>
        <dbReference type="ChEBI" id="CHEBI:60240"/>
        <label>2</label>
        <note>catalytic</note>
    </ligand>
</feature>
<feature type="binding site" evidence="1">
    <location>
        <position position="168"/>
    </location>
    <ligand>
        <name>a divalent metal cation</name>
        <dbReference type="ChEBI" id="CHEBI:60240"/>
        <label>2</label>
        <note>catalytic</note>
    </ligand>
</feature>
<feature type="binding site" evidence="1">
    <location>
        <position position="175"/>
    </location>
    <ligand>
        <name>substrate</name>
    </ligand>
</feature>
<feature type="binding site" evidence="1">
    <location>
        <position position="201"/>
    </location>
    <ligand>
        <name>a divalent metal cation</name>
        <dbReference type="ChEBI" id="CHEBI:60240"/>
        <label>2</label>
        <note>catalytic</note>
    </ligand>
</feature>
<feature type="binding site" evidence="1">
    <location>
        <position position="232"/>
    </location>
    <ligand>
        <name>a divalent metal cation</name>
        <dbReference type="ChEBI" id="CHEBI:60240"/>
        <label>1</label>
    </ligand>
</feature>
<feature type="binding site" evidence="1">
    <location>
        <position position="232"/>
    </location>
    <ligand>
        <name>a divalent metal cation</name>
        <dbReference type="ChEBI" id="CHEBI:60240"/>
        <label>2</label>
        <note>catalytic</note>
    </ligand>
</feature>
<protein>
    <recommendedName>
        <fullName evidence="1">Methionine aminopeptidase 1</fullName>
        <shortName evidence="1">MAP 1</shortName>
        <shortName evidence="1">MetAP 1</shortName>
        <ecNumber evidence="1">3.4.11.18</ecNumber>
    </recommendedName>
    <alternativeName>
        <fullName evidence="1">Peptidase M</fullName>
    </alternativeName>
</protein>
<reference key="1">
    <citation type="journal article" date="1990" name="J. Biochem.">
        <title>Cloning and characterization of a Bacillus subtilis gene homologous to E. coli secY.</title>
        <authorList>
            <person name="Nakamura K."/>
            <person name="Nakamura A."/>
            <person name="Takamatsu H."/>
            <person name="Yoshikawa H."/>
            <person name="Yamane K."/>
        </authorList>
    </citation>
    <scope>NUCLEOTIDE SEQUENCE [GENOMIC DNA]</scope>
</reference>
<reference key="2">
    <citation type="journal article" date="1996" name="Gene">
        <title>Genetic and transcriptional organization of the Bacillus subtilis spc-alpha region.</title>
        <authorList>
            <person name="Suh J.-W."/>
            <person name="Boylan S.A."/>
            <person name="Oh S.H."/>
            <person name="Price C.W."/>
        </authorList>
    </citation>
    <scope>NUCLEOTIDE SEQUENCE [GENOMIC DNA]</scope>
    <source>
        <strain>168 / Marburg / ATCC 6051 / DSM 10 / JCM 1465 / NBRC 13719 / NCIMB 3610 / NRRL NRS-744 / VKM B-501</strain>
    </source>
</reference>
<reference key="3">
    <citation type="journal article" date="1997" name="Nature">
        <title>The complete genome sequence of the Gram-positive bacterium Bacillus subtilis.</title>
        <authorList>
            <person name="Kunst F."/>
            <person name="Ogasawara N."/>
            <person name="Moszer I."/>
            <person name="Albertini A.M."/>
            <person name="Alloni G."/>
            <person name="Azevedo V."/>
            <person name="Bertero M.G."/>
            <person name="Bessieres P."/>
            <person name="Bolotin A."/>
            <person name="Borchert S."/>
            <person name="Borriss R."/>
            <person name="Boursier L."/>
            <person name="Brans A."/>
            <person name="Braun M."/>
            <person name="Brignell S.C."/>
            <person name="Bron S."/>
            <person name="Brouillet S."/>
            <person name="Bruschi C.V."/>
            <person name="Caldwell B."/>
            <person name="Capuano V."/>
            <person name="Carter N.M."/>
            <person name="Choi S.-K."/>
            <person name="Codani J.-J."/>
            <person name="Connerton I.F."/>
            <person name="Cummings N.J."/>
            <person name="Daniel R.A."/>
            <person name="Denizot F."/>
            <person name="Devine K.M."/>
            <person name="Duesterhoeft A."/>
            <person name="Ehrlich S.D."/>
            <person name="Emmerson P.T."/>
            <person name="Entian K.-D."/>
            <person name="Errington J."/>
            <person name="Fabret C."/>
            <person name="Ferrari E."/>
            <person name="Foulger D."/>
            <person name="Fritz C."/>
            <person name="Fujita M."/>
            <person name="Fujita Y."/>
            <person name="Fuma S."/>
            <person name="Galizzi A."/>
            <person name="Galleron N."/>
            <person name="Ghim S.-Y."/>
            <person name="Glaser P."/>
            <person name="Goffeau A."/>
            <person name="Golightly E.J."/>
            <person name="Grandi G."/>
            <person name="Guiseppi G."/>
            <person name="Guy B.J."/>
            <person name="Haga K."/>
            <person name="Haiech J."/>
            <person name="Harwood C.R."/>
            <person name="Henaut A."/>
            <person name="Hilbert H."/>
            <person name="Holsappel S."/>
            <person name="Hosono S."/>
            <person name="Hullo M.-F."/>
            <person name="Itaya M."/>
            <person name="Jones L.-M."/>
            <person name="Joris B."/>
            <person name="Karamata D."/>
            <person name="Kasahara Y."/>
            <person name="Klaerr-Blanchard M."/>
            <person name="Klein C."/>
            <person name="Kobayashi Y."/>
            <person name="Koetter P."/>
            <person name="Koningstein G."/>
            <person name="Krogh S."/>
            <person name="Kumano M."/>
            <person name="Kurita K."/>
            <person name="Lapidus A."/>
            <person name="Lardinois S."/>
            <person name="Lauber J."/>
            <person name="Lazarevic V."/>
            <person name="Lee S.-M."/>
            <person name="Levine A."/>
            <person name="Liu H."/>
            <person name="Masuda S."/>
            <person name="Mauel C."/>
            <person name="Medigue C."/>
            <person name="Medina N."/>
            <person name="Mellado R.P."/>
            <person name="Mizuno M."/>
            <person name="Moestl D."/>
            <person name="Nakai S."/>
            <person name="Noback M."/>
            <person name="Noone D."/>
            <person name="O'Reilly M."/>
            <person name="Ogawa K."/>
            <person name="Ogiwara A."/>
            <person name="Oudega B."/>
            <person name="Park S.-H."/>
            <person name="Parro V."/>
            <person name="Pohl T.M."/>
            <person name="Portetelle D."/>
            <person name="Porwollik S."/>
            <person name="Prescott A.M."/>
            <person name="Presecan E."/>
            <person name="Pujic P."/>
            <person name="Purnelle B."/>
            <person name="Rapoport G."/>
            <person name="Rey M."/>
            <person name="Reynolds S."/>
            <person name="Rieger M."/>
            <person name="Rivolta C."/>
            <person name="Rocha E."/>
            <person name="Roche B."/>
            <person name="Rose M."/>
            <person name="Sadaie Y."/>
            <person name="Sato T."/>
            <person name="Scanlan E."/>
            <person name="Schleich S."/>
            <person name="Schroeter R."/>
            <person name="Scoffone F."/>
            <person name="Sekiguchi J."/>
            <person name="Sekowska A."/>
            <person name="Seror S.J."/>
            <person name="Serror P."/>
            <person name="Shin B.-S."/>
            <person name="Soldo B."/>
            <person name="Sorokin A."/>
            <person name="Tacconi E."/>
            <person name="Takagi T."/>
            <person name="Takahashi H."/>
            <person name="Takemaru K."/>
            <person name="Takeuchi M."/>
            <person name="Tamakoshi A."/>
            <person name="Tanaka T."/>
            <person name="Terpstra P."/>
            <person name="Tognoni A."/>
            <person name="Tosato V."/>
            <person name="Uchiyama S."/>
            <person name="Vandenbol M."/>
            <person name="Vannier F."/>
            <person name="Vassarotti A."/>
            <person name="Viari A."/>
            <person name="Wambutt R."/>
            <person name="Wedler E."/>
            <person name="Wedler H."/>
            <person name="Weitzenegger T."/>
            <person name="Winters P."/>
            <person name="Wipat A."/>
            <person name="Yamamoto H."/>
            <person name="Yamane K."/>
            <person name="Yasumoto K."/>
            <person name="Yata K."/>
            <person name="Yoshida K."/>
            <person name="Yoshikawa H.-F."/>
            <person name="Zumstein E."/>
            <person name="Yoshikawa H."/>
            <person name="Danchin A."/>
        </authorList>
    </citation>
    <scope>NUCLEOTIDE SEQUENCE [LARGE SCALE GENOMIC DNA]</scope>
    <source>
        <strain>168</strain>
    </source>
</reference>
<reference key="4">
    <citation type="journal article" date="2005" name="BMC Microbiol.">
        <title>The two authentic methionine aminopeptidase genes are differentially expressed in Bacillus subtilis.</title>
        <authorList>
            <person name="You C."/>
            <person name="Lu H."/>
            <person name="Sekowska A."/>
            <person name="Fang G."/>
            <person name="Wang Y."/>
            <person name="Gilles A.-M."/>
            <person name="Danchin A."/>
        </authorList>
    </citation>
    <scope>FUNCTION</scope>
    <scope>CATALYTIC ACTIVITY</scope>
    <scope>MASS SPECTROMETRY</scope>
    <scope>COFACTOR</scope>
    <scope>INDUCTION</scope>
    <scope>SUBCELLULAR LOCATION</scope>
    <source>
        <strain>168</strain>
    </source>
</reference>
<gene>
    <name evidence="1" type="primary">map</name>
    <name type="ordered locus">BSU01380</name>
</gene>
<evidence type="ECO:0000255" key="1">
    <source>
        <dbReference type="HAMAP-Rule" id="MF_01974"/>
    </source>
</evidence>
<evidence type="ECO:0000269" key="2">
    <source>
    </source>
</evidence>
<dbReference type="EC" id="3.4.11.18" evidence="1"/>
<dbReference type="EMBL" id="D00619">
    <property type="protein sequence ID" value="BAA00497.1"/>
    <property type="molecule type" value="Genomic_DNA"/>
</dbReference>
<dbReference type="EMBL" id="L47971">
    <property type="protein sequence ID" value="AAB06821.1"/>
    <property type="molecule type" value="Genomic_DNA"/>
</dbReference>
<dbReference type="EMBL" id="AL009126">
    <property type="protein sequence ID" value="CAB11914.1"/>
    <property type="molecule type" value="Genomic_DNA"/>
</dbReference>
<dbReference type="PIR" id="JS0493">
    <property type="entry name" value="JS0493"/>
</dbReference>
<dbReference type="RefSeq" id="WP_003225828.1">
    <property type="nucleotide sequence ID" value="NZ_OZ025638.1"/>
</dbReference>
<dbReference type="SMR" id="P19994"/>
<dbReference type="FunCoup" id="P19994">
    <property type="interactions" value="530"/>
</dbReference>
<dbReference type="STRING" id="224308.BSU01380"/>
<dbReference type="jPOST" id="P19994"/>
<dbReference type="PaxDb" id="224308-BSU01380"/>
<dbReference type="EnsemblBacteria" id="CAB11914">
    <property type="protein sequence ID" value="CAB11914"/>
    <property type="gene ID" value="BSU_01380"/>
</dbReference>
<dbReference type="GeneID" id="86875464"/>
<dbReference type="GeneID" id="938929"/>
<dbReference type="KEGG" id="bsu:BSU01380"/>
<dbReference type="PATRIC" id="fig|224308.179.peg.141"/>
<dbReference type="eggNOG" id="COG0024">
    <property type="taxonomic scope" value="Bacteria"/>
</dbReference>
<dbReference type="InParanoid" id="P19994"/>
<dbReference type="OrthoDB" id="9802055at2"/>
<dbReference type="PhylomeDB" id="P19994"/>
<dbReference type="BioCyc" id="BSUB:BSU01380-MONOMER"/>
<dbReference type="PRO" id="PR:P19994"/>
<dbReference type="Proteomes" id="UP000001570">
    <property type="component" value="Chromosome"/>
</dbReference>
<dbReference type="GO" id="GO:0005829">
    <property type="term" value="C:cytosol"/>
    <property type="evidence" value="ECO:0000318"/>
    <property type="project" value="GO_Central"/>
</dbReference>
<dbReference type="GO" id="GO:0004239">
    <property type="term" value="F:initiator methionyl aminopeptidase activity"/>
    <property type="evidence" value="ECO:0007669"/>
    <property type="project" value="UniProtKB-UniRule"/>
</dbReference>
<dbReference type="GO" id="GO:0046872">
    <property type="term" value="F:metal ion binding"/>
    <property type="evidence" value="ECO:0007669"/>
    <property type="project" value="UniProtKB-UniRule"/>
</dbReference>
<dbReference type="GO" id="GO:0070006">
    <property type="term" value="F:metalloaminopeptidase activity"/>
    <property type="evidence" value="ECO:0000318"/>
    <property type="project" value="GO_Central"/>
</dbReference>
<dbReference type="GO" id="GO:0006508">
    <property type="term" value="P:proteolysis"/>
    <property type="evidence" value="ECO:0007669"/>
    <property type="project" value="UniProtKB-KW"/>
</dbReference>
<dbReference type="CDD" id="cd01086">
    <property type="entry name" value="MetAP1"/>
    <property type="match status" value="1"/>
</dbReference>
<dbReference type="Gene3D" id="3.90.230.10">
    <property type="entry name" value="Creatinase/methionine aminopeptidase superfamily"/>
    <property type="match status" value="1"/>
</dbReference>
<dbReference type="HAMAP" id="MF_01974">
    <property type="entry name" value="MetAP_1"/>
    <property type="match status" value="1"/>
</dbReference>
<dbReference type="InterPro" id="IPR036005">
    <property type="entry name" value="Creatinase/aminopeptidase-like"/>
</dbReference>
<dbReference type="InterPro" id="IPR000994">
    <property type="entry name" value="Pept_M24"/>
</dbReference>
<dbReference type="InterPro" id="IPR001714">
    <property type="entry name" value="Pept_M24_MAP"/>
</dbReference>
<dbReference type="InterPro" id="IPR002467">
    <property type="entry name" value="Pept_M24A_MAP1"/>
</dbReference>
<dbReference type="NCBIfam" id="TIGR00500">
    <property type="entry name" value="met_pdase_I"/>
    <property type="match status" value="1"/>
</dbReference>
<dbReference type="PANTHER" id="PTHR43330">
    <property type="entry name" value="METHIONINE AMINOPEPTIDASE"/>
    <property type="match status" value="1"/>
</dbReference>
<dbReference type="PANTHER" id="PTHR43330:SF27">
    <property type="entry name" value="METHIONINE AMINOPEPTIDASE"/>
    <property type="match status" value="1"/>
</dbReference>
<dbReference type="Pfam" id="PF00557">
    <property type="entry name" value="Peptidase_M24"/>
    <property type="match status" value="1"/>
</dbReference>
<dbReference type="PRINTS" id="PR00599">
    <property type="entry name" value="MAPEPTIDASE"/>
</dbReference>
<dbReference type="SUPFAM" id="SSF55920">
    <property type="entry name" value="Creatinase/aminopeptidase"/>
    <property type="match status" value="1"/>
</dbReference>
<dbReference type="PROSITE" id="PS00680">
    <property type="entry name" value="MAP_1"/>
    <property type="match status" value="1"/>
</dbReference>
<organism>
    <name type="scientific">Bacillus subtilis (strain 168)</name>
    <dbReference type="NCBI Taxonomy" id="224308"/>
    <lineage>
        <taxon>Bacteria</taxon>
        <taxon>Bacillati</taxon>
        <taxon>Bacillota</taxon>
        <taxon>Bacilli</taxon>
        <taxon>Bacillales</taxon>
        <taxon>Bacillaceae</taxon>
        <taxon>Bacillus</taxon>
    </lineage>
</organism>
<name>MAP11_BACSU</name>
<keyword id="KW-0031">Aminopeptidase</keyword>
<keyword id="KW-0963">Cytoplasm</keyword>
<keyword id="KW-0378">Hydrolase</keyword>
<keyword id="KW-0479">Metal-binding</keyword>
<keyword id="KW-0645">Protease</keyword>
<keyword id="KW-1185">Reference proteome</keyword>
<comment type="function">
    <text evidence="1 2">Removes the N-terminal methionine from nascent proteins. The N-terminal methionine is often cleaved when the second residue in the primary sequence is small and uncharged (Met-Ala-, Cys, Gly, Pro, Ser, Thr, or Val). Requires deformylation of the N(alpha)-formylated initiator methionine before it can be hydrolyzed.</text>
</comment>
<comment type="catalytic activity">
    <reaction evidence="1 2">
        <text>Release of N-terminal amino acids, preferentially methionine, from peptides and arylamides.</text>
        <dbReference type="EC" id="3.4.11.18"/>
    </reaction>
</comment>
<comment type="cofactor">
    <cofactor evidence="1">
        <name>Co(2+)</name>
        <dbReference type="ChEBI" id="CHEBI:48828"/>
    </cofactor>
    <cofactor evidence="1">
        <name>Zn(2+)</name>
        <dbReference type="ChEBI" id="CHEBI:29105"/>
    </cofactor>
    <cofactor evidence="1">
        <name>Mn(2+)</name>
        <dbReference type="ChEBI" id="CHEBI:29035"/>
    </cofactor>
    <cofactor evidence="1">
        <name>Fe(2+)</name>
        <dbReference type="ChEBI" id="CHEBI:29033"/>
    </cofactor>
    <text evidence="1">Binds 2 divalent metal cations per subunit. Has a high-affinity and a low affinity metal-binding site. The true nature of the physiological cofactor is under debate. The enzyme is active with cobalt, zinc, manganese or divalent iron ions. Most likely, methionine aminopeptidases function as mononuclear Fe(2+)-metalloproteases under physiological conditions, and the catalytically relevant metal-binding site has been assigned to the histidine-containing high-affinity site.</text>
</comment>
<comment type="subunit">
    <text evidence="1">Monomer.</text>
</comment>
<comment type="subcellular location">
    <subcellularLocation>
        <location evidence="2">Cytoplasm</location>
    </subcellularLocation>
</comment>
<comment type="induction">
    <text evidence="2">Expression increases gradually during the log phase of growth.</text>
</comment>
<comment type="mass spectrometry" mass="27409.17" error="0.92" method="Unknown" evidence="2"/>
<comment type="similarity">
    <text evidence="1">Belongs to the peptidase M24A family. Methionine aminopeptidase type 1 subfamily.</text>
</comment>